<protein>
    <recommendedName>
        <fullName evidence="1">ATP-dependent Clp protease ATP-binding subunit ClpX</fullName>
    </recommendedName>
</protein>
<keyword id="KW-0067">ATP-binding</keyword>
<keyword id="KW-0143">Chaperone</keyword>
<keyword id="KW-0479">Metal-binding</keyword>
<keyword id="KW-0547">Nucleotide-binding</keyword>
<keyword id="KW-1185">Reference proteome</keyword>
<keyword id="KW-0862">Zinc</keyword>
<gene>
    <name evidence="1" type="primary">clpX</name>
    <name type="ordered locus">DIP1789</name>
</gene>
<dbReference type="EMBL" id="BX248359">
    <property type="protein sequence ID" value="CAE50319.1"/>
    <property type="molecule type" value="Genomic_DNA"/>
</dbReference>
<dbReference type="RefSeq" id="WP_010935337.1">
    <property type="nucleotide sequence ID" value="NC_002935.2"/>
</dbReference>
<dbReference type="SMR" id="Q6NFU7"/>
<dbReference type="STRING" id="257309.DIP1789"/>
<dbReference type="GeneID" id="29421771"/>
<dbReference type="KEGG" id="cdi:DIP1789"/>
<dbReference type="HOGENOM" id="CLU_014218_8_2_11"/>
<dbReference type="Proteomes" id="UP000002198">
    <property type="component" value="Chromosome"/>
</dbReference>
<dbReference type="GO" id="GO:0009376">
    <property type="term" value="C:HslUV protease complex"/>
    <property type="evidence" value="ECO:0007669"/>
    <property type="project" value="TreeGrafter"/>
</dbReference>
<dbReference type="GO" id="GO:0005524">
    <property type="term" value="F:ATP binding"/>
    <property type="evidence" value="ECO:0007669"/>
    <property type="project" value="UniProtKB-UniRule"/>
</dbReference>
<dbReference type="GO" id="GO:0016887">
    <property type="term" value="F:ATP hydrolysis activity"/>
    <property type="evidence" value="ECO:0007669"/>
    <property type="project" value="InterPro"/>
</dbReference>
<dbReference type="GO" id="GO:0140662">
    <property type="term" value="F:ATP-dependent protein folding chaperone"/>
    <property type="evidence" value="ECO:0007669"/>
    <property type="project" value="InterPro"/>
</dbReference>
<dbReference type="GO" id="GO:0046983">
    <property type="term" value="F:protein dimerization activity"/>
    <property type="evidence" value="ECO:0007669"/>
    <property type="project" value="InterPro"/>
</dbReference>
<dbReference type="GO" id="GO:0051082">
    <property type="term" value="F:unfolded protein binding"/>
    <property type="evidence" value="ECO:0007669"/>
    <property type="project" value="UniProtKB-UniRule"/>
</dbReference>
<dbReference type="GO" id="GO:0008270">
    <property type="term" value="F:zinc ion binding"/>
    <property type="evidence" value="ECO:0007669"/>
    <property type="project" value="InterPro"/>
</dbReference>
<dbReference type="GO" id="GO:0051301">
    <property type="term" value="P:cell division"/>
    <property type="evidence" value="ECO:0007669"/>
    <property type="project" value="TreeGrafter"/>
</dbReference>
<dbReference type="GO" id="GO:0051603">
    <property type="term" value="P:proteolysis involved in protein catabolic process"/>
    <property type="evidence" value="ECO:0007669"/>
    <property type="project" value="TreeGrafter"/>
</dbReference>
<dbReference type="CDD" id="cd19497">
    <property type="entry name" value="RecA-like_ClpX"/>
    <property type="match status" value="1"/>
</dbReference>
<dbReference type="FunFam" id="1.10.8.60:FF:000002">
    <property type="entry name" value="ATP-dependent Clp protease ATP-binding subunit ClpX"/>
    <property type="match status" value="1"/>
</dbReference>
<dbReference type="FunFam" id="3.40.50.300:FF:000005">
    <property type="entry name" value="ATP-dependent Clp protease ATP-binding subunit ClpX"/>
    <property type="match status" value="1"/>
</dbReference>
<dbReference type="Gene3D" id="1.10.8.60">
    <property type="match status" value="1"/>
</dbReference>
<dbReference type="Gene3D" id="6.20.220.10">
    <property type="entry name" value="ClpX chaperone, C4-type zinc finger domain"/>
    <property type="match status" value="1"/>
</dbReference>
<dbReference type="Gene3D" id="3.40.50.300">
    <property type="entry name" value="P-loop containing nucleotide triphosphate hydrolases"/>
    <property type="match status" value="1"/>
</dbReference>
<dbReference type="HAMAP" id="MF_00175">
    <property type="entry name" value="ClpX"/>
    <property type="match status" value="1"/>
</dbReference>
<dbReference type="InterPro" id="IPR003593">
    <property type="entry name" value="AAA+_ATPase"/>
</dbReference>
<dbReference type="InterPro" id="IPR050052">
    <property type="entry name" value="ATP-dep_Clp_protease_ClpX"/>
</dbReference>
<dbReference type="InterPro" id="IPR003959">
    <property type="entry name" value="ATPase_AAA_core"/>
</dbReference>
<dbReference type="InterPro" id="IPR019489">
    <property type="entry name" value="Clp_ATPase_C"/>
</dbReference>
<dbReference type="InterPro" id="IPR004487">
    <property type="entry name" value="Clp_protease_ATP-bd_su_ClpX"/>
</dbReference>
<dbReference type="InterPro" id="IPR046425">
    <property type="entry name" value="ClpX_bact"/>
</dbReference>
<dbReference type="InterPro" id="IPR027417">
    <property type="entry name" value="P-loop_NTPase"/>
</dbReference>
<dbReference type="InterPro" id="IPR010603">
    <property type="entry name" value="Znf_CppX_C4"/>
</dbReference>
<dbReference type="InterPro" id="IPR038366">
    <property type="entry name" value="Znf_CppX_C4_sf"/>
</dbReference>
<dbReference type="NCBIfam" id="TIGR00382">
    <property type="entry name" value="clpX"/>
    <property type="match status" value="1"/>
</dbReference>
<dbReference type="NCBIfam" id="NF003745">
    <property type="entry name" value="PRK05342.1"/>
    <property type="match status" value="1"/>
</dbReference>
<dbReference type="PANTHER" id="PTHR48102:SF7">
    <property type="entry name" value="ATP-DEPENDENT CLP PROTEASE ATP-BINDING SUBUNIT CLPX-LIKE, MITOCHONDRIAL"/>
    <property type="match status" value="1"/>
</dbReference>
<dbReference type="PANTHER" id="PTHR48102">
    <property type="entry name" value="ATP-DEPENDENT CLP PROTEASE ATP-BINDING SUBUNIT CLPX-LIKE, MITOCHONDRIAL-RELATED"/>
    <property type="match status" value="1"/>
</dbReference>
<dbReference type="Pfam" id="PF07724">
    <property type="entry name" value="AAA_2"/>
    <property type="match status" value="1"/>
</dbReference>
<dbReference type="Pfam" id="PF10431">
    <property type="entry name" value="ClpB_D2-small"/>
    <property type="match status" value="1"/>
</dbReference>
<dbReference type="Pfam" id="PF06689">
    <property type="entry name" value="zf-C4_ClpX"/>
    <property type="match status" value="1"/>
</dbReference>
<dbReference type="SMART" id="SM00382">
    <property type="entry name" value="AAA"/>
    <property type="match status" value="1"/>
</dbReference>
<dbReference type="SMART" id="SM01086">
    <property type="entry name" value="ClpB_D2-small"/>
    <property type="match status" value="1"/>
</dbReference>
<dbReference type="SMART" id="SM00994">
    <property type="entry name" value="zf-C4_ClpX"/>
    <property type="match status" value="1"/>
</dbReference>
<dbReference type="SUPFAM" id="SSF57716">
    <property type="entry name" value="Glucocorticoid receptor-like (DNA-binding domain)"/>
    <property type="match status" value="1"/>
</dbReference>
<dbReference type="SUPFAM" id="SSF52540">
    <property type="entry name" value="P-loop containing nucleoside triphosphate hydrolases"/>
    <property type="match status" value="1"/>
</dbReference>
<dbReference type="PROSITE" id="PS51902">
    <property type="entry name" value="CLPX_ZB"/>
    <property type="match status" value="1"/>
</dbReference>
<reference key="1">
    <citation type="journal article" date="2003" name="Nucleic Acids Res.">
        <title>The complete genome sequence and analysis of Corynebacterium diphtheriae NCTC13129.</title>
        <authorList>
            <person name="Cerdeno-Tarraga A.-M."/>
            <person name="Efstratiou A."/>
            <person name="Dover L.G."/>
            <person name="Holden M.T.G."/>
            <person name="Pallen M.J."/>
            <person name="Bentley S.D."/>
            <person name="Besra G.S."/>
            <person name="Churcher C.M."/>
            <person name="James K.D."/>
            <person name="De Zoysa A."/>
            <person name="Chillingworth T."/>
            <person name="Cronin A."/>
            <person name="Dowd L."/>
            <person name="Feltwell T."/>
            <person name="Hamlin N."/>
            <person name="Holroyd S."/>
            <person name="Jagels K."/>
            <person name="Moule S."/>
            <person name="Quail M.A."/>
            <person name="Rabbinowitsch E."/>
            <person name="Rutherford K.M."/>
            <person name="Thomson N.R."/>
            <person name="Unwin L."/>
            <person name="Whitehead S."/>
            <person name="Barrell B.G."/>
            <person name="Parkhill J."/>
        </authorList>
    </citation>
    <scope>NUCLEOTIDE SEQUENCE [LARGE SCALE GENOMIC DNA]</scope>
    <source>
        <strain>ATCC 700971 / NCTC 13129 / Biotype gravis</strain>
    </source>
</reference>
<sequence>MTRMQESADLLKCSFCGKSQKQVKKLIAGGGVYICDECIELCNEIIEEELNSSAAEAKDNGDRLPRPSQISAFLDKYVIGQDDAKRILSVAVYNHYKRVRAEESRTTHKRASEEETELQKSNILMLGPTGSGKTYLAQTLARLLDVPFAIADATSLTEAGYVGEDVENILLKLLQAADFDVQRAQRGIIYVDEVDKISRKSDNPSITRDVSGEGVQQALLKILEGTVASIPPQGGRKHPNQDFIQLDTSNILFIVAGAFAGLEKVIEERRGKKGIGFGAELTTKADTDAVDVFRDVLPEDLVKFGLIPEFIGRLPIVATVNNLDQASLVKVLTEPRNSLVKQYQRLFDMDRVDLEFDPEALQAIADLAIDRGTGARGLRAIMEELLVPVMYDIPDREDVAVVRINEAAVRGLQEPEMILHSQKDEEEKTA</sequence>
<comment type="function">
    <text evidence="1">ATP-dependent specificity component of the Clp protease. It directs the protease to specific substrates. Can perform chaperone functions in the absence of ClpP.</text>
</comment>
<comment type="subunit">
    <text evidence="1">Component of the ClpX-ClpP complex. Forms a hexameric ring that, in the presence of ATP, binds to fourteen ClpP subunits assembled into a disk-like structure with a central cavity, resembling the structure of eukaryotic proteasomes.</text>
</comment>
<comment type="similarity">
    <text evidence="1">Belongs to the ClpX chaperone family.</text>
</comment>
<accession>Q6NFU7</accession>
<organism>
    <name type="scientific">Corynebacterium diphtheriae (strain ATCC 700971 / NCTC 13129 / Biotype gravis)</name>
    <dbReference type="NCBI Taxonomy" id="257309"/>
    <lineage>
        <taxon>Bacteria</taxon>
        <taxon>Bacillati</taxon>
        <taxon>Actinomycetota</taxon>
        <taxon>Actinomycetes</taxon>
        <taxon>Mycobacteriales</taxon>
        <taxon>Corynebacteriaceae</taxon>
        <taxon>Corynebacterium</taxon>
    </lineage>
</organism>
<name>CLPX_CORDI</name>
<feature type="chain" id="PRO_0000160345" description="ATP-dependent Clp protease ATP-binding subunit ClpX">
    <location>
        <begin position="1"/>
        <end position="430"/>
    </location>
</feature>
<feature type="domain" description="ClpX-type ZB" evidence="2">
    <location>
        <begin position="1"/>
        <end position="54"/>
    </location>
</feature>
<feature type="binding site" evidence="2">
    <location>
        <position position="13"/>
    </location>
    <ligand>
        <name>Zn(2+)</name>
        <dbReference type="ChEBI" id="CHEBI:29105"/>
    </ligand>
</feature>
<feature type="binding site" evidence="2">
    <location>
        <position position="16"/>
    </location>
    <ligand>
        <name>Zn(2+)</name>
        <dbReference type="ChEBI" id="CHEBI:29105"/>
    </ligand>
</feature>
<feature type="binding site" evidence="2">
    <location>
        <position position="35"/>
    </location>
    <ligand>
        <name>Zn(2+)</name>
        <dbReference type="ChEBI" id="CHEBI:29105"/>
    </ligand>
</feature>
<feature type="binding site" evidence="2">
    <location>
        <position position="38"/>
    </location>
    <ligand>
        <name>Zn(2+)</name>
        <dbReference type="ChEBI" id="CHEBI:29105"/>
    </ligand>
</feature>
<feature type="binding site" evidence="1">
    <location>
        <begin position="128"/>
        <end position="135"/>
    </location>
    <ligand>
        <name>ATP</name>
        <dbReference type="ChEBI" id="CHEBI:30616"/>
    </ligand>
</feature>
<proteinExistence type="inferred from homology"/>
<evidence type="ECO:0000255" key="1">
    <source>
        <dbReference type="HAMAP-Rule" id="MF_00175"/>
    </source>
</evidence>
<evidence type="ECO:0000255" key="2">
    <source>
        <dbReference type="PROSITE-ProRule" id="PRU01250"/>
    </source>
</evidence>